<evidence type="ECO:0000250" key="1"/>
<evidence type="ECO:0000255" key="2"/>
<evidence type="ECO:0000256" key="3">
    <source>
        <dbReference type="SAM" id="MobiDB-lite"/>
    </source>
</evidence>
<evidence type="ECO:0000305" key="4"/>
<sequence length="376" mass="41907">MAAAAGVAAGTGRGSGEGEELLPNAVEGDGGCGGGGTCAGDRPWRLNFDGLRRPEAHQEKPPRRFHDRLGGLVQSPGDDVAEYYQQQSELLEGFNEMDTLTDRGFLPGMSKEECEKVARSEALAIRLSNIANMVLFAAKVYASIRSGSLAIIASTLDSLLDLLSGFILWFTAFSKKTSNPYRYPIGKRRMQPLGILVFASVMATLGLQIILESTRSLFYDGDTFRLTKEQEKWVVDIMLSVTSVKLLLVVYCRSFTNEILAIYTIRTWSMTVLENVHSLVGQSASPEYLQKLTYLCWNHHKAVRHIDTVRAYTFGSHYFVEVDIVLPCDMPLQEAHDIGEAPQEKLESLPEIERAFVHLDYEFTHQPEHARSHDTL</sequence>
<accession>Q0DHJ5</accession>
<accession>A0A0P0WN91</accession>
<accession>Q6L4Z8</accession>
<organism>
    <name type="scientific">Oryza sativa subsp. japonica</name>
    <name type="common">Rice</name>
    <dbReference type="NCBI Taxonomy" id="39947"/>
    <lineage>
        <taxon>Eukaryota</taxon>
        <taxon>Viridiplantae</taxon>
        <taxon>Streptophyta</taxon>
        <taxon>Embryophyta</taxon>
        <taxon>Tracheophyta</taxon>
        <taxon>Spermatophyta</taxon>
        <taxon>Magnoliopsida</taxon>
        <taxon>Liliopsida</taxon>
        <taxon>Poales</taxon>
        <taxon>Poaceae</taxon>
        <taxon>BOP clade</taxon>
        <taxon>Oryzoideae</taxon>
        <taxon>Oryzeae</taxon>
        <taxon>Oryzinae</taxon>
        <taxon>Oryza</taxon>
        <taxon>Oryza sativa</taxon>
    </lineage>
</organism>
<feature type="chain" id="PRO_0000400014" description="Metal tolerance protein 6">
    <location>
        <begin position="1"/>
        <end position="376"/>
    </location>
</feature>
<feature type="topological domain" description="Cytoplasmic" evidence="2">
    <location>
        <begin position="1"/>
        <end position="123"/>
    </location>
</feature>
<feature type="transmembrane region" description="Helical" evidence="2">
    <location>
        <begin position="124"/>
        <end position="144"/>
    </location>
</feature>
<feature type="topological domain" description="Vacuolar" evidence="2">
    <location>
        <begin position="145"/>
        <end position="149"/>
    </location>
</feature>
<feature type="transmembrane region" description="Helical" evidence="2">
    <location>
        <begin position="150"/>
        <end position="170"/>
    </location>
</feature>
<feature type="topological domain" description="Cytoplasmic" evidence="2">
    <location>
        <begin position="171"/>
        <end position="191"/>
    </location>
</feature>
<feature type="transmembrane region" description="Helical" evidence="2">
    <location>
        <begin position="192"/>
        <end position="212"/>
    </location>
</feature>
<feature type="topological domain" description="Vacuolar" evidence="2">
    <location>
        <begin position="213"/>
        <end position="231"/>
    </location>
</feature>
<feature type="transmembrane region" description="Helical" evidence="2">
    <location>
        <begin position="232"/>
        <end position="252"/>
    </location>
</feature>
<feature type="topological domain" description="Cytoplasmic" evidence="2">
    <location>
        <begin position="253"/>
        <end position="376"/>
    </location>
</feature>
<feature type="region of interest" description="Disordered" evidence="3">
    <location>
        <begin position="1"/>
        <end position="28"/>
    </location>
</feature>
<reference key="1">
    <citation type="journal article" date="2005" name="Mol. Genet. Genomics">
        <title>A fine physical map of the rice chromosome 5.</title>
        <authorList>
            <person name="Cheng C.-H."/>
            <person name="Chung M.C."/>
            <person name="Liu S.-M."/>
            <person name="Chen S.-K."/>
            <person name="Kao F.Y."/>
            <person name="Lin S.-J."/>
            <person name="Hsiao S.-H."/>
            <person name="Tseng I.C."/>
            <person name="Hsing Y.-I.C."/>
            <person name="Wu H.-P."/>
            <person name="Chen C.-S."/>
            <person name="Shaw J.-F."/>
            <person name="Wu J."/>
            <person name="Matsumoto T."/>
            <person name="Sasaki T."/>
            <person name="Chen H.-C."/>
            <person name="Chow T.-Y."/>
        </authorList>
    </citation>
    <scope>NUCLEOTIDE SEQUENCE [LARGE SCALE GENOMIC DNA]</scope>
    <source>
        <strain>cv. Nipponbare</strain>
    </source>
</reference>
<reference key="2">
    <citation type="journal article" date="2005" name="Nature">
        <title>The map-based sequence of the rice genome.</title>
        <authorList>
            <consortium name="International rice genome sequencing project (IRGSP)"/>
        </authorList>
    </citation>
    <scope>NUCLEOTIDE SEQUENCE [LARGE SCALE GENOMIC DNA]</scope>
    <source>
        <strain>cv. Nipponbare</strain>
    </source>
</reference>
<reference key="3">
    <citation type="journal article" date="2008" name="Nucleic Acids Res.">
        <title>The rice annotation project database (RAP-DB): 2008 update.</title>
        <authorList>
            <consortium name="The rice annotation project (RAP)"/>
        </authorList>
    </citation>
    <scope>GENOME REANNOTATION</scope>
    <source>
        <strain>cv. Nipponbare</strain>
    </source>
</reference>
<reference key="4">
    <citation type="journal article" date="2013" name="Rice">
        <title>Improvement of the Oryza sativa Nipponbare reference genome using next generation sequence and optical map data.</title>
        <authorList>
            <person name="Kawahara Y."/>
            <person name="de la Bastide M."/>
            <person name="Hamilton J.P."/>
            <person name="Kanamori H."/>
            <person name="McCombie W.R."/>
            <person name="Ouyang S."/>
            <person name="Schwartz D.C."/>
            <person name="Tanaka T."/>
            <person name="Wu J."/>
            <person name="Zhou S."/>
            <person name="Childs K.L."/>
            <person name="Davidson R.M."/>
            <person name="Lin H."/>
            <person name="Quesada-Ocampo L."/>
            <person name="Vaillancourt B."/>
            <person name="Sakai H."/>
            <person name="Lee S.S."/>
            <person name="Kim J."/>
            <person name="Numa H."/>
            <person name="Itoh T."/>
            <person name="Buell C.R."/>
            <person name="Matsumoto T."/>
        </authorList>
    </citation>
    <scope>GENOME REANNOTATION</scope>
    <source>
        <strain>cv. Nipponbare</strain>
    </source>
</reference>
<comment type="function">
    <text evidence="1">Involved in sequestration of excess metal in the cytoplasm into vacuoles to maintain metal homeostasis.</text>
</comment>
<comment type="subcellular location">
    <subcellularLocation>
        <location evidence="1">Vacuole membrane</location>
        <topology evidence="1">Multi-pass membrane protein</topology>
    </subcellularLocation>
    <text>Tonoplast.</text>
</comment>
<comment type="similarity">
    <text evidence="4">Belongs to the cation diffusion facilitator (CDF) transporter (TC 2.A.4) family. SLC30A subfamily.</text>
</comment>
<comment type="sequence caution" evidence="4">
    <conflict type="erroneous gene model prediction">
        <sequence resource="EMBL-CDS" id="AAT39176"/>
    </conflict>
</comment>
<comment type="sequence caution" evidence="4">
    <conflict type="erroneous gene model prediction">
        <sequence resource="EMBL-CDS" id="AAT39183"/>
    </conflict>
</comment>
<proteinExistence type="evidence at transcript level"/>
<gene>
    <name type="primary">MTP6</name>
    <name type="ordered locus">Os05g0461900</name>
    <name type="ordered locus">LOC_Os05g38670</name>
    <name type="ORF">OJ1281_H05.16</name>
    <name type="ORF">OJ1525_A02.3</name>
</gene>
<keyword id="KW-0406">Ion transport</keyword>
<keyword id="KW-0472">Membrane</keyword>
<keyword id="KW-1185">Reference proteome</keyword>
<keyword id="KW-0812">Transmembrane</keyword>
<keyword id="KW-1133">Transmembrane helix</keyword>
<keyword id="KW-0813">Transport</keyword>
<keyword id="KW-0926">Vacuole</keyword>
<protein>
    <recommendedName>
        <fullName>Metal tolerance protein 6</fullName>
        <shortName>OsMTP6</shortName>
    </recommendedName>
</protein>
<dbReference type="EMBL" id="AC108876">
    <property type="protein sequence ID" value="AAT39183.1"/>
    <property type="status" value="ALT_SEQ"/>
    <property type="molecule type" value="Genomic_DNA"/>
</dbReference>
<dbReference type="EMBL" id="AC117265">
    <property type="protein sequence ID" value="AAT39176.1"/>
    <property type="status" value="ALT_SEQ"/>
    <property type="molecule type" value="Genomic_DNA"/>
</dbReference>
<dbReference type="EMBL" id="AP008211">
    <property type="protein sequence ID" value="BAF17678.2"/>
    <property type="molecule type" value="Genomic_DNA"/>
</dbReference>
<dbReference type="EMBL" id="AP014961">
    <property type="protein sequence ID" value="BAS94416.1"/>
    <property type="molecule type" value="Genomic_DNA"/>
</dbReference>
<dbReference type="RefSeq" id="XP_015638176.1">
    <property type="nucleotide sequence ID" value="XM_015782690.1"/>
</dbReference>
<dbReference type="SMR" id="Q0DHJ5"/>
<dbReference type="STRING" id="39947.Q0DHJ5"/>
<dbReference type="PaxDb" id="39947-Q0DHJ5"/>
<dbReference type="EnsemblPlants" id="Os05t0461900-00">
    <property type="protein sequence ID" value="Os05t0461900-00"/>
    <property type="gene ID" value="Os05g0461900"/>
</dbReference>
<dbReference type="Gramene" id="Os05t0461900-00">
    <property type="protein sequence ID" value="Os05t0461900-00"/>
    <property type="gene ID" value="Os05g0461900"/>
</dbReference>
<dbReference type="KEGG" id="dosa:Os05g0461900"/>
<dbReference type="eggNOG" id="KOG1485">
    <property type="taxonomic scope" value="Eukaryota"/>
</dbReference>
<dbReference type="HOGENOM" id="CLU_013430_2_3_1"/>
<dbReference type="InParanoid" id="Q0DHJ5"/>
<dbReference type="OMA" id="CAGDRPW"/>
<dbReference type="Proteomes" id="UP000000763">
    <property type="component" value="Chromosome 5"/>
</dbReference>
<dbReference type="Proteomes" id="UP000059680">
    <property type="component" value="Chromosome 5"/>
</dbReference>
<dbReference type="GO" id="GO:0016020">
    <property type="term" value="C:membrane"/>
    <property type="evidence" value="ECO:0000318"/>
    <property type="project" value="GO_Central"/>
</dbReference>
<dbReference type="GO" id="GO:0005774">
    <property type="term" value="C:vacuolar membrane"/>
    <property type="evidence" value="ECO:0007669"/>
    <property type="project" value="UniProtKB-SubCell"/>
</dbReference>
<dbReference type="GO" id="GO:0010486">
    <property type="term" value="F:manganese:proton antiporter activity"/>
    <property type="evidence" value="ECO:0000318"/>
    <property type="project" value="GO_Central"/>
</dbReference>
<dbReference type="FunFam" id="3.30.70.1350:FF:000001">
    <property type="entry name" value="Metal tolerance protein 11"/>
    <property type="match status" value="1"/>
</dbReference>
<dbReference type="Gene3D" id="1.20.1510.10">
    <property type="entry name" value="Cation efflux protein transmembrane domain"/>
    <property type="match status" value="1"/>
</dbReference>
<dbReference type="Gene3D" id="3.30.70.1350">
    <property type="entry name" value="Cation efflux protein, cytoplasmic domain"/>
    <property type="match status" value="1"/>
</dbReference>
<dbReference type="InterPro" id="IPR002524">
    <property type="entry name" value="Cation_efflux"/>
</dbReference>
<dbReference type="InterPro" id="IPR027470">
    <property type="entry name" value="Cation_efflux_CTD"/>
</dbReference>
<dbReference type="InterPro" id="IPR036837">
    <property type="entry name" value="Cation_efflux_CTD_sf"/>
</dbReference>
<dbReference type="InterPro" id="IPR027469">
    <property type="entry name" value="Cation_efflux_TMD_sf"/>
</dbReference>
<dbReference type="InterPro" id="IPR050291">
    <property type="entry name" value="CDF_Transporter"/>
</dbReference>
<dbReference type="PANTHER" id="PTHR43840:SF26">
    <property type="entry name" value="METAL TOLERANCE PROTEIN 6"/>
    <property type="match status" value="1"/>
</dbReference>
<dbReference type="PANTHER" id="PTHR43840">
    <property type="entry name" value="MITOCHONDRIAL METAL TRANSPORTER 1-RELATED"/>
    <property type="match status" value="1"/>
</dbReference>
<dbReference type="Pfam" id="PF01545">
    <property type="entry name" value="Cation_efflux"/>
    <property type="match status" value="1"/>
</dbReference>
<dbReference type="Pfam" id="PF16916">
    <property type="entry name" value="ZT_dimer"/>
    <property type="match status" value="1"/>
</dbReference>
<dbReference type="SUPFAM" id="SSF160240">
    <property type="entry name" value="Cation efflux protein cytoplasmic domain-like"/>
    <property type="match status" value="1"/>
</dbReference>
<dbReference type="SUPFAM" id="SSF161111">
    <property type="entry name" value="Cation efflux protein transmembrane domain-like"/>
    <property type="match status" value="1"/>
</dbReference>
<name>MTP6_ORYSJ</name>